<keyword id="KW-0963">Cytoplasm</keyword>
<keyword id="KW-0342">GTP-binding</keyword>
<keyword id="KW-0547">Nucleotide-binding</keyword>
<keyword id="KW-0648">Protein biosynthesis</keyword>
<comment type="function">
    <text evidence="1">Increases the formation of ribosomal termination complexes and stimulates activities of RF-1 and RF-2. It binds guanine nucleotides and has strong preference for UGA stop codons. It may interact directly with the ribosome. The stimulation of RF-1 and RF-2 is significantly reduced by GTP and GDP, but not by GMP.</text>
</comment>
<comment type="subcellular location">
    <subcellularLocation>
        <location evidence="1">Cytoplasm</location>
    </subcellularLocation>
</comment>
<comment type="similarity">
    <text evidence="1">Belongs to the TRAFAC class translation factor GTPase superfamily. Classic translation factor GTPase family. PrfC subfamily.</text>
</comment>
<dbReference type="EMBL" id="AE008923">
    <property type="protein sequence ID" value="AAM37887.1"/>
    <property type="molecule type" value="Genomic_DNA"/>
</dbReference>
<dbReference type="RefSeq" id="WP_003482377.1">
    <property type="nucleotide sequence ID" value="NC_003919.1"/>
</dbReference>
<dbReference type="SMR" id="Q8PI56"/>
<dbReference type="KEGG" id="xac:XAC3042"/>
<dbReference type="eggNOG" id="COG4108">
    <property type="taxonomic scope" value="Bacteria"/>
</dbReference>
<dbReference type="HOGENOM" id="CLU_002794_2_1_6"/>
<dbReference type="Proteomes" id="UP000000576">
    <property type="component" value="Chromosome"/>
</dbReference>
<dbReference type="GO" id="GO:0005829">
    <property type="term" value="C:cytosol"/>
    <property type="evidence" value="ECO:0007669"/>
    <property type="project" value="TreeGrafter"/>
</dbReference>
<dbReference type="GO" id="GO:0005525">
    <property type="term" value="F:GTP binding"/>
    <property type="evidence" value="ECO:0007669"/>
    <property type="project" value="UniProtKB-UniRule"/>
</dbReference>
<dbReference type="GO" id="GO:0003924">
    <property type="term" value="F:GTPase activity"/>
    <property type="evidence" value="ECO:0007669"/>
    <property type="project" value="InterPro"/>
</dbReference>
<dbReference type="GO" id="GO:0097216">
    <property type="term" value="F:guanosine tetraphosphate binding"/>
    <property type="evidence" value="ECO:0007669"/>
    <property type="project" value="UniProtKB-ARBA"/>
</dbReference>
<dbReference type="GO" id="GO:0016150">
    <property type="term" value="F:translation release factor activity, codon nonspecific"/>
    <property type="evidence" value="ECO:0007669"/>
    <property type="project" value="TreeGrafter"/>
</dbReference>
<dbReference type="GO" id="GO:0016149">
    <property type="term" value="F:translation release factor activity, codon specific"/>
    <property type="evidence" value="ECO:0007669"/>
    <property type="project" value="UniProtKB-UniRule"/>
</dbReference>
<dbReference type="GO" id="GO:0006449">
    <property type="term" value="P:regulation of translational termination"/>
    <property type="evidence" value="ECO:0007669"/>
    <property type="project" value="UniProtKB-UniRule"/>
</dbReference>
<dbReference type="CDD" id="cd04169">
    <property type="entry name" value="RF3"/>
    <property type="match status" value="1"/>
</dbReference>
<dbReference type="CDD" id="cd03689">
    <property type="entry name" value="RF3_II"/>
    <property type="match status" value="1"/>
</dbReference>
<dbReference type="CDD" id="cd16259">
    <property type="entry name" value="RF3_III"/>
    <property type="match status" value="1"/>
</dbReference>
<dbReference type="FunFam" id="2.40.30.10:FF:000040">
    <property type="entry name" value="Peptide chain release factor 3"/>
    <property type="match status" value="1"/>
</dbReference>
<dbReference type="FunFam" id="3.30.70.3280:FF:000001">
    <property type="entry name" value="Peptide chain release factor 3"/>
    <property type="match status" value="1"/>
</dbReference>
<dbReference type="FunFam" id="3.40.50.300:FF:000542">
    <property type="entry name" value="Peptide chain release factor 3"/>
    <property type="match status" value="1"/>
</dbReference>
<dbReference type="Gene3D" id="3.40.50.300">
    <property type="entry name" value="P-loop containing nucleotide triphosphate hydrolases"/>
    <property type="match status" value="2"/>
</dbReference>
<dbReference type="Gene3D" id="3.30.70.3280">
    <property type="entry name" value="Peptide chain release factor 3, domain III"/>
    <property type="match status" value="1"/>
</dbReference>
<dbReference type="HAMAP" id="MF_00072">
    <property type="entry name" value="Rel_fac_3"/>
    <property type="match status" value="1"/>
</dbReference>
<dbReference type="InterPro" id="IPR053905">
    <property type="entry name" value="EF-G-like_DII"/>
</dbReference>
<dbReference type="InterPro" id="IPR035647">
    <property type="entry name" value="EFG_III/V"/>
</dbReference>
<dbReference type="InterPro" id="IPR031157">
    <property type="entry name" value="G_TR_CS"/>
</dbReference>
<dbReference type="InterPro" id="IPR027417">
    <property type="entry name" value="P-loop_NTPase"/>
</dbReference>
<dbReference type="InterPro" id="IPR004548">
    <property type="entry name" value="PrfC"/>
</dbReference>
<dbReference type="InterPro" id="IPR032090">
    <property type="entry name" value="RF3_C"/>
</dbReference>
<dbReference type="InterPro" id="IPR038467">
    <property type="entry name" value="RF3_dom_3_sf"/>
</dbReference>
<dbReference type="InterPro" id="IPR041732">
    <property type="entry name" value="RF3_GTP-bd"/>
</dbReference>
<dbReference type="InterPro" id="IPR005225">
    <property type="entry name" value="Small_GTP-bd"/>
</dbReference>
<dbReference type="InterPro" id="IPR000795">
    <property type="entry name" value="T_Tr_GTP-bd_dom"/>
</dbReference>
<dbReference type="InterPro" id="IPR009000">
    <property type="entry name" value="Transl_B-barrel_sf"/>
</dbReference>
<dbReference type="NCBIfam" id="TIGR00503">
    <property type="entry name" value="prfC"/>
    <property type="match status" value="1"/>
</dbReference>
<dbReference type="NCBIfam" id="NF001964">
    <property type="entry name" value="PRK00741.1"/>
    <property type="match status" value="1"/>
</dbReference>
<dbReference type="NCBIfam" id="TIGR00231">
    <property type="entry name" value="small_GTP"/>
    <property type="match status" value="1"/>
</dbReference>
<dbReference type="PANTHER" id="PTHR43556">
    <property type="entry name" value="PEPTIDE CHAIN RELEASE FACTOR RF3"/>
    <property type="match status" value="1"/>
</dbReference>
<dbReference type="PANTHER" id="PTHR43556:SF2">
    <property type="entry name" value="PEPTIDE CHAIN RELEASE FACTOR RF3"/>
    <property type="match status" value="1"/>
</dbReference>
<dbReference type="Pfam" id="PF22042">
    <property type="entry name" value="EF-G_D2"/>
    <property type="match status" value="1"/>
</dbReference>
<dbReference type="Pfam" id="PF00009">
    <property type="entry name" value="GTP_EFTU"/>
    <property type="match status" value="1"/>
</dbReference>
<dbReference type="Pfam" id="PF16658">
    <property type="entry name" value="RF3_C"/>
    <property type="match status" value="1"/>
</dbReference>
<dbReference type="PRINTS" id="PR00315">
    <property type="entry name" value="ELONGATNFCT"/>
</dbReference>
<dbReference type="SUPFAM" id="SSF54980">
    <property type="entry name" value="EF-G C-terminal domain-like"/>
    <property type="match status" value="1"/>
</dbReference>
<dbReference type="SUPFAM" id="SSF52540">
    <property type="entry name" value="P-loop containing nucleoside triphosphate hydrolases"/>
    <property type="match status" value="1"/>
</dbReference>
<dbReference type="SUPFAM" id="SSF50447">
    <property type="entry name" value="Translation proteins"/>
    <property type="match status" value="1"/>
</dbReference>
<dbReference type="PROSITE" id="PS00301">
    <property type="entry name" value="G_TR_1"/>
    <property type="match status" value="1"/>
</dbReference>
<dbReference type="PROSITE" id="PS51722">
    <property type="entry name" value="G_TR_2"/>
    <property type="match status" value="1"/>
</dbReference>
<name>RF3_XANAC</name>
<proteinExistence type="inferred from homology"/>
<organism>
    <name type="scientific">Xanthomonas axonopodis pv. citri (strain 306)</name>
    <dbReference type="NCBI Taxonomy" id="190486"/>
    <lineage>
        <taxon>Bacteria</taxon>
        <taxon>Pseudomonadati</taxon>
        <taxon>Pseudomonadota</taxon>
        <taxon>Gammaproteobacteria</taxon>
        <taxon>Lysobacterales</taxon>
        <taxon>Lysobacteraceae</taxon>
        <taxon>Xanthomonas</taxon>
    </lineage>
</organism>
<accession>Q8PI56</accession>
<feature type="chain" id="PRO_0000210983" description="Peptide chain release factor 3">
    <location>
        <begin position="1"/>
        <end position="534"/>
    </location>
</feature>
<feature type="domain" description="tr-type G">
    <location>
        <begin position="9"/>
        <end position="278"/>
    </location>
</feature>
<feature type="binding site" evidence="1">
    <location>
        <begin position="18"/>
        <end position="25"/>
    </location>
    <ligand>
        <name>GTP</name>
        <dbReference type="ChEBI" id="CHEBI:37565"/>
    </ligand>
</feature>
<feature type="binding site" evidence="1">
    <location>
        <begin position="86"/>
        <end position="90"/>
    </location>
    <ligand>
        <name>GTP</name>
        <dbReference type="ChEBI" id="CHEBI:37565"/>
    </ligand>
</feature>
<feature type="binding site" evidence="1">
    <location>
        <begin position="140"/>
        <end position="143"/>
    </location>
    <ligand>
        <name>GTP</name>
        <dbReference type="ChEBI" id="CHEBI:37565"/>
    </ligand>
</feature>
<reference key="1">
    <citation type="journal article" date="2002" name="Nature">
        <title>Comparison of the genomes of two Xanthomonas pathogens with differing host specificities.</title>
        <authorList>
            <person name="da Silva A.C.R."/>
            <person name="Ferro J.A."/>
            <person name="Reinach F.C."/>
            <person name="Farah C.S."/>
            <person name="Furlan L.R."/>
            <person name="Quaggio R.B."/>
            <person name="Monteiro-Vitorello C.B."/>
            <person name="Van Sluys M.A."/>
            <person name="Almeida N.F. Jr."/>
            <person name="Alves L.M.C."/>
            <person name="do Amaral A.M."/>
            <person name="Bertolini M.C."/>
            <person name="Camargo L.E.A."/>
            <person name="Camarotte G."/>
            <person name="Cannavan F."/>
            <person name="Cardozo J."/>
            <person name="Chambergo F."/>
            <person name="Ciapina L.P."/>
            <person name="Cicarelli R.M.B."/>
            <person name="Coutinho L.L."/>
            <person name="Cursino-Santos J.R."/>
            <person name="El-Dorry H."/>
            <person name="Faria J.B."/>
            <person name="Ferreira A.J.S."/>
            <person name="Ferreira R.C.C."/>
            <person name="Ferro M.I.T."/>
            <person name="Formighieri E.F."/>
            <person name="Franco M.C."/>
            <person name="Greggio C.C."/>
            <person name="Gruber A."/>
            <person name="Katsuyama A.M."/>
            <person name="Kishi L.T."/>
            <person name="Leite R.P."/>
            <person name="Lemos E.G.M."/>
            <person name="Lemos M.V.F."/>
            <person name="Locali E.C."/>
            <person name="Machado M.A."/>
            <person name="Madeira A.M.B.N."/>
            <person name="Martinez-Rossi N.M."/>
            <person name="Martins E.C."/>
            <person name="Meidanis J."/>
            <person name="Menck C.F.M."/>
            <person name="Miyaki C.Y."/>
            <person name="Moon D.H."/>
            <person name="Moreira L.M."/>
            <person name="Novo M.T.M."/>
            <person name="Okura V.K."/>
            <person name="Oliveira M.C."/>
            <person name="Oliveira V.R."/>
            <person name="Pereira H.A."/>
            <person name="Rossi A."/>
            <person name="Sena J.A.D."/>
            <person name="Silva C."/>
            <person name="de Souza R.F."/>
            <person name="Spinola L.A.F."/>
            <person name="Takita M.A."/>
            <person name="Tamura R.E."/>
            <person name="Teixeira E.C."/>
            <person name="Tezza R.I.D."/>
            <person name="Trindade dos Santos M."/>
            <person name="Truffi D."/>
            <person name="Tsai S.M."/>
            <person name="White F.F."/>
            <person name="Setubal J.C."/>
            <person name="Kitajima J.P."/>
        </authorList>
    </citation>
    <scope>NUCLEOTIDE SEQUENCE [LARGE SCALE GENOMIC DNA]</scope>
    <source>
        <strain>306</strain>
    </source>
</reference>
<evidence type="ECO:0000255" key="1">
    <source>
        <dbReference type="HAMAP-Rule" id="MF_00072"/>
    </source>
</evidence>
<gene>
    <name evidence="1" type="primary">prfC</name>
    <name type="ordered locus">XAC3042</name>
</gene>
<sequence length="534" mass="59029">MSEVSNEAARRRTFAIISHPDAGKTTLTEKLLLFGGAIQMAGSVKGRKAARHATSDWMALEKERGISVTSSVMQFPYEGKIVNLLDTPGHADFGEDTYRVLTAVDSALMVIDVAKGVEERTIKLMEVCRLRDTPIMTFINKLDREGKNPIDLLDEVETVLGIQCAPVTWPIGMGQRLKGVVHLISGEVHLYEQGRNFTRQDSTIFPSLDAPGLVEKIGEQMLAELREELELVQGASNPFDLDAYRAGQQTPVFFGSGVNNFGVQPLLDFFVEHAPPPQTRETTGRRVEPTEAKLSGFVFKIQANMDPQHRDRVAFMRVCSGKFTAGMKTLHVRSGKDVKLANALTFMASDREIAAEAWPGDVIGIHNHGTISIGDTFTEGESLSFTGIPNFAPELFRRARLRDPLKLKQLQKGLAQLSEEGATQFFRPLMSNDLILGAVGVLQFDVVAYRLKDEYGVDAIFEPVSVTTARWVHCDNPKKLEEFREKNAGNLGIDAAGELVYLAPTRVNLQLAQERAPDVRFSATREHAHVKAVD</sequence>
<protein>
    <recommendedName>
        <fullName evidence="1">Peptide chain release factor 3</fullName>
        <shortName evidence="1">RF-3</shortName>
    </recommendedName>
</protein>